<sequence>MKIRASVRKICEKCRLIRRRRRIMIICLNPKHKQRQG</sequence>
<dbReference type="EMBL" id="DQ821119">
    <property type="protein sequence ID" value="ABG79634.1"/>
    <property type="molecule type" value="Genomic_DNA"/>
</dbReference>
<dbReference type="RefSeq" id="YP_001023735.1">
    <property type="nucleotide sequence ID" value="NC_008829.1"/>
</dbReference>
<dbReference type="SMR" id="A2T367"/>
<dbReference type="GeneID" id="4788163"/>
<dbReference type="GO" id="GO:0009507">
    <property type="term" value="C:chloroplast"/>
    <property type="evidence" value="ECO:0007669"/>
    <property type="project" value="UniProtKB-SubCell"/>
</dbReference>
<dbReference type="GO" id="GO:1990904">
    <property type="term" value="C:ribonucleoprotein complex"/>
    <property type="evidence" value="ECO:0007669"/>
    <property type="project" value="UniProtKB-KW"/>
</dbReference>
<dbReference type="GO" id="GO:0005840">
    <property type="term" value="C:ribosome"/>
    <property type="evidence" value="ECO:0007669"/>
    <property type="project" value="UniProtKB-KW"/>
</dbReference>
<dbReference type="GO" id="GO:0003735">
    <property type="term" value="F:structural constituent of ribosome"/>
    <property type="evidence" value="ECO:0007669"/>
    <property type="project" value="InterPro"/>
</dbReference>
<dbReference type="GO" id="GO:0006412">
    <property type="term" value="P:translation"/>
    <property type="evidence" value="ECO:0007669"/>
    <property type="project" value="UniProtKB-UniRule"/>
</dbReference>
<dbReference type="HAMAP" id="MF_00251">
    <property type="entry name" value="Ribosomal_bL36"/>
    <property type="match status" value="1"/>
</dbReference>
<dbReference type="InterPro" id="IPR000473">
    <property type="entry name" value="Ribosomal_bL36"/>
</dbReference>
<dbReference type="InterPro" id="IPR035977">
    <property type="entry name" value="Ribosomal_bL36_sp"/>
</dbReference>
<dbReference type="NCBIfam" id="TIGR01022">
    <property type="entry name" value="rpmJ_bact"/>
    <property type="match status" value="1"/>
</dbReference>
<dbReference type="PANTHER" id="PTHR42888">
    <property type="entry name" value="50S RIBOSOMAL PROTEIN L36, CHLOROPLASTIC"/>
    <property type="match status" value="1"/>
</dbReference>
<dbReference type="PANTHER" id="PTHR42888:SF1">
    <property type="entry name" value="LARGE RIBOSOMAL SUBUNIT PROTEIN BL36C"/>
    <property type="match status" value="1"/>
</dbReference>
<dbReference type="Pfam" id="PF00444">
    <property type="entry name" value="Ribosomal_L36"/>
    <property type="match status" value="1"/>
</dbReference>
<dbReference type="SUPFAM" id="SSF57840">
    <property type="entry name" value="Ribosomal protein L36"/>
    <property type="match status" value="1"/>
</dbReference>
<dbReference type="PROSITE" id="PS00828">
    <property type="entry name" value="RIBOSOMAL_L36"/>
    <property type="match status" value="1"/>
</dbReference>
<organism>
    <name type="scientific">Angiopteris evecta</name>
    <name type="common">Mule's foot fern</name>
    <name type="synonym">Polypodium evectum</name>
    <dbReference type="NCBI Taxonomy" id="13825"/>
    <lineage>
        <taxon>Eukaryota</taxon>
        <taxon>Viridiplantae</taxon>
        <taxon>Streptophyta</taxon>
        <taxon>Embryophyta</taxon>
        <taxon>Tracheophyta</taxon>
        <taxon>Polypodiopsida</taxon>
        <taxon>Marattiidae</taxon>
        <taxon>Marattiales</taxon>
        <taxon>Marattiaceae</taxon>
        <taxon>Angiopteris</taxon>
    </lineage>
</organism>
<proteinExistence type="inferred from homology"/>
<accession>A2T367</accession>
<evidence type="ECO:0000255" key="1">
    <source>
        <dbReference type="HAMAP-Rule" id="MF_00251"/>
    </source>
</evidence>
<evidence type="ECO:0000305" key="2"/>
<comment type="subcellular location">
    <subcellularLocation>
        <location>Plastid</location>
        <location>Chloroplast</location>
    </subcellularLocation>
</comment>
<comment type="similarity">
    <text evidence="1">Belongs to the bacterial ribosomal protein bL36 family.</text>
</comment>
<keyword id="KW-0150">Chloroplast</keyword>
<keyword id="KW-0934">Plastid</keyword>
<keyword id="KW-0687">Ribonucleoprotein</keyword>
<keyword id="KW-0689">Ribosomal protein</keyword>
<reference key="1">
    <citation type="journal article" date="2007" name="Am. Fern J.">
        <title>The complete plastid genome sequence of Angiopteris evecta (G. Forst.) Hoffm. (Marattiaceae).</title>
        <authorList>
            <person name="Roper J.M."/>
            <person name="Hansen S.K."/>
            <person name="Wolf P.G."/>
            <person name="Karol K.G."/>
            <person name="Mandoli D.F."/>
            <person name="Everett K.D.E."/>
            <person name="Kuehl J.V."/>
            <person name="Boore J.L."/>
        </authorList>
    </citation>
    <scope>NUCLEOTIDE SEQUENCE [LARGE SCALE GENOMIC DNA]</scope>
</reference>
<feature type="chain" id="PRO_0000344742" description="Large ribosomal subunit protein bL36c">
    <location>
        <begin position="1"/>
        <end position="37"/>
    </location>
</feature>
<protein>
    <recommendedName>
        <fullName evidence="1">Large ribosomal subunit protein bL36c</fullName>
    </recommendedName>
    <alternativeName>
        <fullName evidence="2">50S ribosomal protein L36, chloroplastic</fullName>
    </alternativeName>
</protein>
<gene>
    <name evidence="1" type="primary">rpl36</name>
</gene>
<geneLocation type="chloroplast"/>
<name>RK36_ANGEV</name>